<sequence length="353" mass="37944">MAIDENKQKALAAALGQIEKQFGKGSIMRLGEDRSMDVETISTGSLSLDIALGAGGLPMGRIVEIYGPESSGKTTLTLQVIAAAQREGKTCAFIDAEHALDPVYARKLGVDIDNLLCSQPDTGEQALEICDALARSGAVDVIVVDSVAALTPKAEIEGEIGDSHMGLAARMMSQAMRKLAGNLKQSNTLLIFINQIRMKIGVMFGNPETTTGGNALKFYASVRLDIRRIGAVKEGDNVVGSETRVKVVKNKIAAPFKQAEFQILYGEGINFYGELVDLGVKEKLIEKAGAWYSYNGEKIGQGKANATTWLKENPATAKEIEKRVRELLLSNQNATPDFAVDDSEGVAETNEDF</sequence>
<comment type="function">
    <text evidence="1">Can catalyze the hydrolysis of ATP in the presence of single-stranded DNA, the ATP-dependent uptake of single-stranded DNA by duplex DNA, and the ATP-dependent hybridization of homologous single-stranded DNAs. It interacts with LexA causing its activation and leading to its autocatalytic cleavage.</text>
</comment>
<comment type="subcellular location">
    <subcellularLocation>
        <location evidence="1">Cytoplasm</location>
    </subcellularLocation>
</comment>
<comment type="similarity">
    <text evidence="1">Belongs to the RecA family.</text>
</comment>
<gene>
    <name evidence="1" type="primary">recA</name>
    <name type="ordered locus">SG2732</name>
</gene>
<evidence type="ECO:0000255" key="1">
    <source>
        <dbReference type="HAMAP-Rule" id="MF_00268"/>
    </source>
</evidence>
<protein>
    <recommendedName>
        <fullName evidence="1">Protein RecA</fullName>
    </recommendedName>
    <alternativeName>
        <fullName evidence="1">Recombinase A</fullName>
    </alternativeName>
</protein>
<organism>
    <name type="scientific">Salmonella gallinarum (strain 287/91 / NCTC 13346)</name>
    <dbReference type="NCBI Taxonomy" id="550538"/>
    <lineage>
        <taxon>Bacteria</taxon>
        <taxon>Pseudomonadati</taxon>
        <taxon>Pseudomonadota</taxon>
        <taxon>Gammaproteobacteria</taxon>
        <taxon>Enterobacterales</taxon>
        <taxon>Enterobacteriaceae</taxon>
        <taxon>Salmonella</taxon>
    </lineage>
</organism>
<feature type="chain" id="PRO_1000114363" description="Protein RecA">
    <location>
        <begin position="1"/>
        <end position="353"/>
    </location>
</feature>
<feature type="binding site" evidence="1">
    <location>
        <begin position="67"/>
        <end position="74"/>
    </location>
    <ligand>
        <name>ATP</name>
        <dbReference type="ChEBI" id="CHEBI:30616"/>
    </ligand>
</feature>
<proteinExistence type="inferred from homology"/>
<keyword id="KW-0067">ATP-binding</keyword>
<keyword id="KW-0963">Cytoplasm</keyword>
<keyword id="KW-0227">DNA damage</keyword>
<keyword id="KW-0233">DNA recombination</keyword>
<keyword id="KW-0234">DNA repair</keyword>
<keyword id="KW-0238">DNA-binding</keyword>
<keyword id="KW-0547">Nucleotide-binding</keyword>
<keyword id="KW-0742">SOS response</keyword>
<dbReference type="EMBL" id="AM933173">
    <property type="protein sequence ID" value="CAR38541.1"/>
    <property type="molecule type" value="Genomic_DNA"/>
</dbReference>
<dbReference type="RefSeq" id="WP_000963150.1">
    <property type="nucleotide sequence ID" value="NC_011274.1"/>
</dbReference>
<dbReference type="SMR" id="B5RDF4"/>
<dbReference type="KEGG" id="seg:SG2732"/>
<dbReference type="HOGENOM" id="CLU_040469_3_2_6"/>
<dbReference type="Proteomes" id="UP000008321">
    <property type="component" value="Chromosome"/>
</dbReference>
<dbReference type="GO" id="GO:0005829">
    <property type="term" value="C:cytosol"/>
    <property type="evidence" value="ECO:0007669"/>
    <property type="project" value="TreeGrafter"/>
</dbReference>
<dbReference type="GO" id="GO:0005524">
    <property type="term" value="F:ATP binding"/>
    <property type="evidence" value="ECO:0007669"/>
    <property type="project" value="UniProtKB-UniRule"/>
</dbReference>
<dbReference type="GO" id="GO:0016887">
    <property type="term" value="F:ATP hydrolysis activity"/>
    <property type="evidence" value="ECO:0007669"/>
    <property type="project" value="InterPro"/>
</dbReference>
<dbReference type="GO" id="GO:0140664">
    <property type="term" value="F:ATP-dependent DNA damage sensor activity"/>
    <property type="evidence" value="ECO:0007669"/>
    <property type="project" value="InterPro"/>
</dbReference>
<dbReference type="GO" id="GO:0003684">
    <property type="term" value="F:damaged DNA binding"/>
    <property type="evidence" value="ECO:0007669"/>
    <property type="project" value="UniProtKB-UniRule"/>
</dbReference>
<dbReference type="GO" id="GO:0003697">
    <property type="term" value="F:single-stranded DNA binding"/>
    <property type="evidence" value="ECO:0007669"/>
    <property type="project" value="UniProtKB-UniRule"/>
</dbReference>
<dbReference type="GO" id="GO:0006310">
    <property type="term" value="P:DNA recombination"/>
    <property type="evidence" value="ECO:0007669"/>
    <property type="project" value="UniProtKB-UniRule"/>
</dbReference>
<dbReference type="GO" id="GO:0006281">
    <property type="term" value="P:DNA repair"/>
    <property type="evidence" value="ECO:0007669"/>
    <property type="project" value="UniProtKB-UniRule"/>
</dbReference>
<dbReference type="GO" id="GO:0009432">
    <property type="term" value="P:SOS response"/>
    <property type="evidence" value="ECO:0007669"/>
    <property type="project" value="UniProtKB-UniRule"/>
</dbReference>
<dbReference type="CDD" id="cd00983">
    <property type="entry name" value="RecA"/>
    <property type="match status" value="1"/>
</dbReference>
<dbReference type="FunFam" id="3.40.50.300:FF:000087">
    <property type="entry name" value="Recombinase RecA"/>
    <property type="match status" value="1"/>
</dbReference>
<dbReference type="Gene3D" id="3.40.50.300">
    <property type="entry name" value="P-loop containing nucleotide triphosphate hydrolases"/>
    <property type="match status" value="1"/>
</dbReference>
<dbReference type="HAMAP" id="MF_00268">
    <property type="entry name" value="RecA"/>
    <property type="match status" value="1"/>
</dbReference>
<dbReference type="InterPro" id="IPR003593">
    <property type="entry name" value="AAA+_ATPase"/>
</dbReference>
<dbReference type="InterPro" id="IPR013765">
    <property type="entry name" value="DNA_recomb/repair_RecA"/>
</dbReference>
<dbReference type="InterPro" id="IPR020584">
    <property type="entry name" value="DNA_recomb/repair_RecA_CS"/>
</dbReference>
<dbReference type="InterPro" id="IPR027417">
    <property type="entry name" value="P-loop_NTPase"/>
</dbReference>
<dbReference type="InterPro" id="IPR049261">
    <property type="entry name" value="RecA-like_C"/>
</dbReference>
<dbReference type="InterPro" id="IPR049428">
    <property type="entry name" value="RecA-like_N"/>
</dbReference>
<dbReference type="InterPro" id="IPR020588">
    <property type="entry name" value="RecA_ATP-bd"/>
</dbReference>
<dbReference type="InterPro" id="IPR023400">
    <property type="entry name" value="RecA_C_sf"/>
</dbReference>
<dbReference type="InterPro" id="IPR020587">
    <property type="entry name" value="RecA_monomer-monomer_interface"/>
</dbReference>
<dbReference type="NCBIfam" id="TIGR02012">
    <property type="entry name" value="tigrfam_recA"/>
    <property type="match status" value="1"/>
</dbReference>
<dbReference type="PANTHER" id="PTHR45900:SF1">
    <property type="entry name" value="MITOCHONDRIAL DNA REPAIR PROTEIN RECA HOMOLOG-RELATED"/>
    <property type="match status" value="1"/>
</dbReference>
<dbReference type="PANTHER" id="PTHR45900">
    <property type="entry name" value="RECA"/>
    <property type="match status" value="1"/>
</dbReference>
<dbReference type="Pfam" id="PF00154">
    <property type="entry name" value="RecA"/>
    <property type="match status" value="1"/>
</dbReference>
<dbReference type="Pfam" id="PF21096">
    <property type="entry name" value="RecA_C"/>
    <property type="match status" value="1"/>
</dbReference>
<dbReference type="PRINTS" id="PR00142">
    <property type="entry name" value="RECA"/>
</dbReference>
<dbReference type="SMART" id="SM00382">
    <property type="entry name" value="AAA"/>
    <property type="match status" value="1"/>
</dbReference>
<dbReference type="SUPFAM" id="SSF52540">
    <property type="entry name" value="P-loop containing nucleoside triphosphate hydrolases"/>
    <property type="match status" value="1"/>
</dbReference>
<dbReference type="SUPFAM" id="SSF54752">
    <property type="entry name" value="RecA protein, C-terminal domain"/>
    <property type="match status" value="1"/>
</dbReference>
<dbReference type="PROSITE" id="PS00321">
    <property type="entry name" value="RECA_1"/>
    <property type="match status" value="1"/>
</dbReference>
<dbReference type="PROSITE" id="PS50162">
    <property type="entry name" value="RECA_2"/>
    <property type="match status" value="1"/>
</dbReference>
<dbReference type="PROSITE" id="PS50163">
    <property type="entry name" value="RECA_3"/>
    <property type="match status" value="1"/>
</dbReference>
<reference key="1">
    <citation type="journal article" date="2008" name="Genome Res.">
        <title>Comparative genome analysis of Salmonella enteritidis PT4 and Salmonella gallinarum 287/91 provides insights into evolutionary and host adaptation pathways.</title>
        <authorList>
            <person name="Thomson N.R."/>
            <person name="Clayton D.J."/>
            <person name="Windhorst D."/>
            <person name="Vernikos G."/>
            <person name="Davidson S."/>
            <person name="Churcher C."/>
            <person name="Quail M.A."/>
            <person name="Stevens M."/>
            <person name="Jones M.A."/>
            <person name="Watson M."/>
            <person name="Barron A."/>
            <person name="Layton A."/>
            <person name="Pickard D."/>
            <person name="Kingsley R.A."/>
            <person name="Bignell A."/>
            <person name="Clark L."/>
            <person name="Harris B."/>
            <person name="Ormond D."/>
            <person name="Abdellah Z."/>
            <person name="Brooks K."/>
            <person name="Cherevach I."/>
            <person name="Chillingworth T."/>
            <person name="Woodward J."/>
            <person name="Norberczak H."/>
            <person name="Lord A."/>
            <person name="Arrowsmith C."/>
            <person name="Jagels K."/>
            <person name="Moule S."/>
            <person name="Mungall K."/>
            <person name="Saunders M."/>
            <person name="Whitehead S."/>
            <person name="Chabalgoity J.A."/>
            <person name="Maskell D."/>
            <person name="Humphreys T."/>
            <person name="Roberts M."/>
            <person name="Barrow P.A."/>
            <person name="Dougan G."/>
            <person name="Parkhill J."/>
        </authorList>
    </citation>
    <scope>NUCLEOTIDE SEQUENCE [LARGE SCALE GENOMIC DNA]</scope>
    <source>
        <strain>287/91 / NCTC 13346</strain>
    </source>
</reference>
<name>RECA_SALG2</name>
<accession>B5RDF4</accession>